<dbReference type="EC" id="3.1.3.82" evidence="4"/>
<dbReference type="EMBL" id="BX572605">
    <property type="protein sequence ID" value="CAE29429.1"/>
    <property type="molecule type" value="Genomic_DNA"/>
</dbReference>
<dbReference type="RefSeq" id="WP_011159524.1">
    <property type="nucleotide sequence ID" value="NZ_CP116810.1"/>
</dbReference>
<dbReference type="SMR" id="Q6N2R1"/>
<dbReference type="STRING" id="258594.RPA3988"/>
<dbReference type="DNASU" id="2692359"/>
<dbReference type="GeneID" id="66895105"/>
<dbReference type="eggNOG" id="COG0241">
    <property type="taxonomic scope" value="Bacteria"/>
</dbReference>
<dbReference type="HOGENOM" id="CLU_085077_3_2_5"/>
<dbReference type="PhylomeDB" id="Q6N2R1"/>
<dbReference type="UniPathway" id="UPA00356">
    <property type="reaction ID" value="UER00438"/>
</dbReference>
<dbReference type="UniPathway" id="UPA00958"/>
<dbReference type="GO" id="GO:0005737">
    <property type="term" value="C:cytoplasm"/>
    <property type="evidence" value="ECO:0007669"/>
    <property type="project" value="UniProtKB-SubCell"/>
</dbReference>
<dbReference type="GO" id="GO:0034200">
    <property type="term" value="F:D-glycero-beta-D-manno-heptose 1,7-bisphosphate 7-phosphatase activity"/>
    <property type="evidence" value="ECO:0007669"/>
    <property type="project" value="UniProtKB-EC"/>
</dbReference>
<dbReference type="GO" id="GO:0046872">
    <property type="term" value="F:metal ion binding"/>
    <property type="evidence" value="ECO:0007669"/>
    <property type="project" value="UniProtKB-KW"/>
</dbReference>
<dbReference type="GO" id="GO:0097171">
    <property type="term" value="P:ADP-L-glycero-beta-D-manno-heptose biosynthetic process"/>
    <property type="evidence" value="ECO:0007669"/>
    <property type="project" value="UniProtKB-UniPathway"/>
</dbReference>
<dbReference type="GO" id="GO:0009244">
    <property type="term" value="P:lipopolysaccharide core region biosynthetic process"/>
    <property type="evidence" value="ECO:0007669"/>
    <property type="project" value="UniProtKB-UniPathway"/>
</dbReference>
<dbReference type="CDD" id="cd07503">
    <property type="entry name" value="HAD_HisB-N"/>
    <property type="match status" value="1"/>
</dbReference>
<dbReference type="Gene3D" id="3.40.50.1000">
    <property type="entry name" value="HAD superfamily/HAD-like"/>
    <property type="match status" value="1"/>
</dbReference>
<dbReference type="InterPro" id="IPR036412">
    <property type="entry name" value="HAD-like_sf"/>
</dbReference>
<dbReference type="InterPro" id="IPR006549">
    <property type="entry name" value="HAD-SF_hydro_IIIA"/>
</dbReference>
<dbReference type="InterPro" id="IPR023214">
    <property type="entry name" value="HAD_sf"/>
</dbReference>
<dbReference type="InterPro" id="IPR004446">
    <property type="entry name" value="Heptose_bisP_phosphatase"/>
</dbReference>
<dbReference type="InterPro" id="IPR006543">
    <property type="entry name" value="Histidinol-phos"/>
</dbReference>
<dbReference type="NCBIfam" id="TIGR01662">
    <property type="entry name" value="HAD-SF-IIIA"/>
    <property type="match status" value="1"/>
</dbReference>
<dbReference type="NCBIfam" id="TIGR01656">
    <property type="entry name" value="Histidinol-ppas"/>
    <property type="match status" value="1"/>
</dbReference>
<dbReference type="PANTHER" id="PTHR42891">
    <property type="entry name" value="D-GLYCERO-BETA-D-MANNO-HEPTOSE-1,7-BISPHOSPHATE 7-PHOSPHATASE"/>
    <property type="match status" value="1"/>
</dbReference>
<dbReference type="PANTHER" id="PTHR42891:SF1">
    <property type="entry name" value="D-GLYCERO-BETA-D-MANNO-HEPTOSE-1,7-BISPHOSPHATE 7-PHOSPHATASE"/>
    <property type="match status" value="1"/>
</dbReference>
<dbReference type="Pfam" id="PF00702">
    <property type="entry name" value="Hydrolase"/>
    <property type="match status" value="1"/>
</dbReference>
<dbReference type="PIRSF" id="PIRSF004682">
    <property type="entry name" value="GmhB"/>
    <property type="match status" value="1"/>
</dbReference>
<dbReference type="SUPFAM" id="SSF56784">
    <property type="entry name" value="HAD-like"/>
    <property type="match status" value="1"/>
</dbReference>
<organism>
    <name type="scientific">Rhodopseudomonas palustris (strain ATCC BAA-98 / CGA009)</name>
    <dbReference type="NCBI Taxonomy" id="258594"/>
    <lineage>
        <taxon>Bacteria</taxon>
        <taxon>Pseudomonadati</taxon>
        <taxon>Pseudomonadota</taxon>
        <taxon>Alphaproteobacteria</taxon>
        <taxon>Hyphomicrobiales</taxon>
        <taxon>Nitrobacteraceae</taxon>
        <taxon>Rhodopseudomonas</taxon>
    </lineage>
</organism>
<keyword id="KW-0119">Carbohydrate metabolism</keyword>
<keyword id="KW-0963">Cytoplasm</keyword>
<keyword id="KW-0378">Hydrolase</keyword>
<keyword id="KW-0448">Lipopolysaccharide biosynthesis</keyword>
<keyword id="KW-0460">Magnesium</keyword>
<keyword id="KW-0479">Metal-binding</keyword>
<gene>
    <name evidence="1" type="primary">gmhB</name>
    <name evidence="7" type="ordered locus">RPA3988</name>
</gene>
<proteinExistence type="evidence at protein level"/>
<sequence length="180" mass="20082">MTASAPRRPAAFLDRDGVINYNDHYVGTRERLRWMPGIAAAIRQLNAAGYYVFIITNQSGVARGMFSEDDVRALHRWMLDELNTQGARIDDVRFCPHHVEGTLDAYRVACEHRKPGPGMILDLAKTWPVDMTRSFVIGDSASDVEAAKAAGIPGFRFEGEDIDVFVKQVLIEMQRAAVSN</sequence>
<comment type="function">
    <text evidence="4">Converts the D-glycero-beta-D-manno-heptose 1,7-bisphosphate (beta-HBP) intermediate into D-glycero-beta-D-manno-heptose 1-phosphate by removing the phosphate group at the C-7 position. Also catalyzes the dephosphorylation of D-glycero-alpha-D-manno-heptose 1,7-bisphosphate in vitro.</text>
</comment>
<comment type="catalytic activity">
    <reaction evidence="4">
        <text>D-glycero-beta-D-manno-heptose 1,7-bisphosphate + H2O = D-glycero-beta-D-manno-heptose 1-phosphate + phosphate</text>
        <dbReference type="Rhea" id="RHEA:28518"/>
        <dbReference type="ChEBI" id="CHEBI:15377"/>
        <dbReference type="ChEBI" id="CHEBI:43474"/>
        <dbReference type="ChEBI" id="CHEBI:60208"/>
        <dbReference type="ChEBI" id="CHEBI:61593"/>
        <dbReference type="EC" id="3.1.3.82"/>
    </reaction>
</comment>
<comment type="cofactor">
    <cofactor evidence="4">
        <name>Mg(2+)</name>
        <dbReference type="ChEBI" id="CHEBI:18420"/>
    </cofactor>
</comment>
<comment type="pathway">
    <text evidence="6">Nucleotide-sugar biosynthesis; ADP-L-glycero-beta-D-manno-heptose biosynthesis; ADP-L-glycero-beta-D-manno-heptose from D-glycero-beta-D-manno-heptose 7-phosphate: step 2/4.</text>
</comment>
<comment type="pathway">
    <text evidence="1">Bacterial outer membrane biogenesis; LPS core biosynthesis.</text>
</comment>
<comment type="subunit">
    <text evidence="1">Monomer.</text>
</comment>
<comment type="subcellular location">
    <subcellularLocation>
        <location evidence="3">Cytoplasm</location>
    </subcellularLocation>
</comment>
<comment type="similarity">
    <text evidence="3">Belongs to the gmhB family.</text>
</comment>
<name>GMHBB_RHOPA</name>
<protein>
    <recommendedName>
        <fullName evidence="1">D-glycero-beta-D-manno-heptose-1,7-bisphosphate 7-phosphatase</fullName>
        <ecNumber evidence="4">3.1.3.82</ecNumber>
    </recommendedName>
    <alternativeName>
        <fullName evidence="3">D,D-heptose 1,7-bisphosphate phosphatase</fullName>
        <shortName evidence="1">HBP phosphatase</shortName>
    </alternativeName>
</protein>
<reference key="1">
    <citation type="journal article" date="2004" name="Nat. Biotechnol.">
        <title>Complete genome sequence of the metabolically versatile photosynthetic bacterium Rhodopseudomonas palustris.</title>
        <authorList>
            <person name="Larimer F.W."/>
            <person name="Chain P."/>
            <person name="Hauser L."/>
            <person name="Lamerdin J.E."/>
            <person name="Malfatti S."/>
            <person name="Do L."/>
            <person name="Land M.L."/>
            <person name="Pelletier D.A."/>
            <person name="Beatty J.T."/>
            <person name="Lang A.S."/>
            <person name="Tabita F.R."/>
            <person name="Gibson J.L."/>
            <person name="Hanson T.E."/>
            <person name="Bobst C."/>
            <person name="Torres y Torres J.L."/>
            <person name="Peres C."/>
            <person name="Harrison F.H."/>
            <person name="Gibson J."/>
            <person name="Harwood C.S."/>
        </authorList>
    </citation>
    <scope>NUCLEOTIDE SEQUENCE [LARGE SCALE GENOMIC DNA]</scope>
    <source>
        <strain>ATCC BAA-98 / CGA009</strain>
    </source>
</reference>
<reference evidence="5" key="2">
    <citation type="journal article" date="2015" name="Proc. Natl. Acad. Sci. U.S.A.">
        <title>Panoramic view of a superfamily of phosphatases through substrate profiling.</title>
        <authorList>
            <person name="Huang H."/>
            <person name="Pandya C."/>
            <person name="Liu C."/>
            <person name="Al-Obaidi N.F."/>
            <person name="Wang M."/>
            <person name="Zheng L."/>
            <person name="Toews Keating S."/>
            <person name="Aono M."/>
            <person name="Love J.D."/>
            <person name="Evans B."/>
            <person name="Seidel R.D."/>
            <person name="Hillerich B.S."/>
            <person name="Garforth S.J."/>
            <person name="Almo S.C."/>
            <person name="Mariano P.S."/>
            <person name="Dunaway-Mariano D."/>
            <person name="Allen K.N."/>
            <person name="Farelli J.D."/>
        </authorList>
    </citation>
    <scope>FUNCTION</scope>
    <scope>CATALYTIC ACTIVITY</scope>
    <scope>COFACTOR</scope>
</reference>
<accession>Q6N2R1</accession>
<evidence type="ECO:0000250" key="1">
    <source>
        <dbReference type="UniProtKB" id="P63228"/>
    </source>
</evidence>
<evidence type="ECO:0000250" key="2">
    <source>
        <dbReference type="UniProtKB" id="Q7WG29"/>
    </source>
</evidence>
<evidence type="ECO:0000255" key="3">
    <source>
        <dbReference type="PIRNR" id="PIRNR004682"/>
    </source>
</evidence>
<evidence type="ECO:0000269" key="4">
    <source>
    </source>
</evidence>
<evidence type="ECO:0000305" key="5"/>
<evidence type="ECO:0000305" key="6">
    <source>
    </source>
</evidence>
<evidence type="ECO:0000312" key="7">
    <source>
        <dbReference type="EMBL" id="CAE29429.1"/>
    </source>
</evidence>
<feature type="chain" id="PRO_0000435568" description="D-glycero-beta-D-manno-heptose-1,7-bisphosphate 7-phosphatase" evidence="5">
    <location>
        <begin position="1"/>
        <end position="180"/>
    </location>
</feature>
<feature type="active site" description="Nucleophile" evidence="1">
    <location>
        <position position="14"/>
    </location>
</feature>
<feature type="active site" description="Proton donor" evidence="1">
    <location>
        <position position="16"/>
    </location>
</feature>
<feature type="binding site" evidence="1">
    <location>
        <begin position="14"/>
        <end position="16"/>
    </location>
    <ligand>
        <name>substrate</name>
    </ligand>
</feature>
<feature type="binding site" evidence="1">
    <location>
        <position position="14"/>
    </location>
    <ligand>
        <name>Mg(2+)</name>
        <dbReference type="ChEBI" id="CHEBI:18420"/>
    </ligand>
</feature>
<feature type="binding site" evidence="1">
    <location>
        <position position="16"/>
    </location>
    <ligand>
        <name>Mg(2+)</name>
        <dbReference type="ChEBI" id="CHEBI:18420"/>
    </ligand>
</feature>
<feature type="binding site" evidence="1">
    <location>
        <begin position="22"/>
        <end position="25"/>
    </location>
    <ligand>
        <name>substrate</name>
    </ligand>
</feature>
<feature type="binding site" evidence="1">
    <location>
        <begin position="56"/>
        <end position="59"/>
    </location>
    <ligand>
        <name>substrate</name>
    </ligand>
</feature>
<feature type="binding site" evidence="2">
    <location>
        <position position="95"/>
    </location>
    <ligand>
        <name>Zn(2+)</name>
        <dbReference type="ChEBI" id="CHEBI:29105"/>
    </ligand>
</feature>
<feature type="binding site" evidence="2">
    <location>
        <position position="97"/>
    </location>
    <ligand>
        <name>Zn(2+)</name>
        <dbReference type="ChEBI" id="CHEBI:29105"/>
    </ligand>
</feature>
<feature type="binding site" evidence="2">
    <location>
        <position position="110"/>
    </location>
    <ligand>
        <name>Zn(2+)</name>
        <dbReference type="ChEBI" id="CHEBI:29105"/>
    </ligand>
</feature>
<feature type="binding site" evidence="2">
    <location>
        <position position="112"/>
    </location>
    <ligand>
        <name>Zn(2+)</name>
        <dbReference type="ChEBI" id="CHEBI:29105"/>
    </ligand>
</feature>
<feature type="binding site" evidence="1">
    <location>
        <begin position="113"/>
        <end position="114"/>
    </location>
    <ligand>
        <name>substrate</name>
    </ligand>
</feature>
<feature type="binding site" evidence="1">
    <location>
        <position position="139"/>
    </location>
    <ligand>
        <name>Mg(2+)</name>
        <dbReference type="ChEBI" id="CHEBI:18420"/>
    </ligand>
</feature>
<feature type="site" description="Stabilizes the phosphoryl group" evidence="1">
    <location>
        <position position="56"/>
    </location>
</feature>
<feature type="site" description="Contributes to substrate recognition" evidence="1">
    <location>
        <position position="113"/>
    </location>
</feature>
<feature type="site" description="Stabilizes the phosphoryl group" evidence="1">
    <location>
        <position position="114"/>
    </location>
</feature>